<organism>
    <name type="scientific">Chlamydia caviae (strain ATCC VR-813 / DSM 19441 / 03DC25 / GPIC)</name>
    <name type="common">Chlamydophila caviae</name>
    <dbReference type="NCBI Taxonomy" id="227941"/>
    <lineage>
        <taxon>Bacteria</taxon>
        <taxon>Pseudomonadati</taxon>
        <taxon>Chlamydiota</taxon>
        <taxon>Chlamydiia</taxon>
        <taxon>Chlamydiales</taxon>
        <taxon>Chlamydiaceae</taxon>
        <taxon>Chlamydia/Chlamydophila group</taxon>
        <taxon>Chlamydia</taxon>
    </lineage>
</organism>
<accession>H2VFV1</accession>
<protein>
    <recommendedName>
        <fullName evidence="5">Inclusion membrane protein A</fullName>
    </recommendedName>
</protein>
<dbReference type="EMBL" id="AE015925">
    <property type="protein sequence ID" value="AAP05293.1"/>
    <property type="molecule type" value="Genomic_DNA"/>
</dbReference>
<dbReference type="RefSeq" id="WP_011006508.1">
    <property type="nucleotide sequence ID" value="NC_003361.3"/>
</dbReference>
<dbReference type="SMR" id="H2VFV1"/>
<dbReference type="STRING" id="227941.CCA_00550"/>
<dbReference type="KEGG" id="cca:CCA_00550"/>
<dbReference type="HOGENOM" id="CLU_072760_0_0_0"/>
<dbReference type="OrthoDB" id="18035at2"/>
<dbReference type="Proteomes" id="UP000002193">
    <property type="component" value="Chromosome"/>
</dbReference>
<dbReference type="GO" id="GO:0005576">
    <property type="term" value="C:extracellular region"/>
    <property type="evidence" value="ECO:0007669"/>
    <property type="project" value="UniProtKB-SubCell"/>
</dbReference>
<dbReference type="GO" id="GO:0033644">
    <property type="term" value="C:host cell membrane"/>
    <property type="evidence" value="ECO:0007669"/>
    <property type="project" value="UniProtKB-KW"/>
</dbReference>
<dbReference type="GO" id="GO:0140221">
    <property type="term" value="C:pathogen-containing vacuole membrane"/>
    <property type="evidence" value="ECO:0007669"/>
    <property type="project" value="UniProtKB-SubCell"/>
</dbReference>
<dbReference type="Gene3D" id="1.10.287.1490">
    <property type="match status" value="1"/>
</dbReference>
<keyword id="KW-0175">Coiled coil</keyword>
<keyword id="KW-1043">Host membrane</keyword>
<keyword id="KW-0472">Membrane</keyword>
<keyword id="KW-0964">Secreted</keyword>
<keyword id="KW-0812">Transmembrane</keyword>
<keyword id="KW-1133">Transmembrane helix</keyword>
<name>INCA_CHLCV</name>
<sequence length="355" mass="38802">MTVSTDNTSPVISRASSPTFGDHGKDFDNNKIIPISIEAPTSSAAAVGAKTAIEPEGRSPLLQRICYLVKIIAAIALFVVGIAALVCLYLGSVISTPSLILMLAIMLVSFVIVITAIRDGTPSQVVRHMKQQIQQFGEENTRLHTAVENLKAVNVELSEQINQLKQLHTRLSDFGDRLEANTGDFTALIADFQLSLEEFKSVGTKVETMLSPFEKLAQSLKETFSQEAVQAMMSSVTELRTNLNALKELITENKTVIEQLKADAQLREEQVRFLEKRKQELEEACSTLSHSIATLQESTTLLKDSTTNLHAVESRLIGVMVQDGAESSTVEEASQDDSAQPQDENQSDAGEHKDS</sequence>
<gene>
    <name type="primary">incA</name>
    <name type="ordered locus">CCA_00550</name>
</gene>
<comment type="function">
    <text evidence="1">Chlamydia replicate within a host intracellular vacuole, termed an inclusion, which is formed by fusion of many smaller inclusion bodies. IncA is probably involved in the homotypic fusion of inclusions.</text>
</comment>
<comment type="subunit">
    <text evidence="4">Forms homodimers, and probably higher-order oligomers too.</text>
</comment>
<comment type="subcellular location">
    <subcellularLocation>
        <location evidence="1">Secreted</location>
    </subcellularLocation>
    <subcellularLocation>
        <location evidence="7">Host vacuole</location>
        <location evidence="7">Host pathogen-containing vacuole</location>
        <location evidence="7">Host pathogen-containing vacuole membrane</location>
        <topology evidence="2">Multi-pass membrane protein</topology>
    </subcellularLocation>
    <text evidence="1 7">Secreted, probably by a type III secretion system (By similarity). Localized in the inclusion membrane (Probable). In the inclusion, the C-terminus faces the host cytosol (Probable).</text>
</comment>
<comment type="domain">
    <text evidence="7">IncA proteins share the same general organization: a short N-terminal domain, a large bilobed hydrophobic domain, and a C-terminal cytoplasmic domain.</text>
</comment>
<comment type="similarity">
    <text evidence="6">Belongs to the IncA family.</text>
</comment>
<reference key="1">
    <citation type="journal article" date="2003" name="Nucleic Acids Res.">
        <title>Genome sequence of Chlamydophila caviae (Chlamydia psittaci GPIC): examining the role of niche-specific genes in the evolution of the Chlamydiaceae.</title>
        <authorList>
            <person name="Read T.D."/>
            <person name="Myers G.S.A."/>
            <person name="Brunham R.C."/>
            <person name="Nelson W.C."/>
            <person name="Paulsen I.T."/>
            <person name="Heidelberg J.F."/>
            <person name="Holtzapple E.K."/>
            <person name="Khouri H.M."/>
            <person name="Federova N.B."/>
            <person name="Carty H.A."/>
            <person name="Umayam L.A."/>
            <person name="Haft D.H."/>
            <person name="Peterson J.D."/>
            <person name="Beanan M.J."/>
            <person name="White O."/>
            <person name="Salzberg S.L."/>
            <person name="Hsia R.-C."/>
            <person name="McClarty G."/>
            <person name="Rank R.G."/>
            <person name="Bavoil P.M."/>
            <person name="Fraser C.M."/>
        </authorList>
    </citation>
    <scope>NUCLEOTIDE SEQUENCE [LARGE SCALE GENOMIC DNA]</scope>
    <source>
        <strain>ATCC VR-813 / DSM 19441 / 03DC25 / GPIC</strain>
    </source>
</reference>
<reference key="2">
    <citation type="journal article" date="2004" name="J. Biol. Chem.">
        <title>Conservation of the biochemical properties of IncA from Chlamydia trachomatis and Chlamydia caviae: oligomerization of IncA mediates interaction between facing membranes.</title>
        <authorList>
            <person name="Delevoye C."/>
            <person name="Nilges M."/>
            <person name="Dautry-Varsat A."/>
            <person name="Subtil A."/>
        </authorList>
    </citation>
    <scope>SUBUNIT</scope>
    <scope>OLIGOMERIZATION</scope>
    <scope>DOMAIN</scope>
    <scope>MUTAGENESIS BY DOMAIN DELETION</scope>
    <source>
        <strain>ATCC VR-813 / DSM 19441 / 03DC25 / GPIC</strain>
    </source>
</reference>
<feature type="chain" id="PRO_0000446190" description="Inclusion membrane protein A">
    <location>
        <begin position="1"/>
        <end position="355"/>
    </location>
</feature>
<feature type="transmembrane region" description="Helical" evidence="2">
    <location>
        <begin position="67"/>
        <end position="91"/>
    </location>
</feature>
<feature type="transmembrane region" description="Helical" evidence="2">
    <location>
        <begin position="97"/>
        <end position="117"/>
    </location>
</feature>
<feature type="region of interest" description="Disordered" evidence="3">
    <location>
        <begin position="1"/>
        <end position="25"/>
    </location>
</feature>
<feature type="region of interest" description="Required for membrane anchoring" evidence="4">
    <location>
        <begin position="54"/>
        <end position="118"/>
    </location>
</feature>
<feature type="region of interest" description="Disordered" evidence="3">
    <location>
        <begin position="320"/>
        <end position="355"/>
    </location>
</feature>
<feature type="coiled-coil region" evidence="2">
    <location>
        <begin position="243"/>
        <end position="298"/>
    </location>
</feature>
<feature type="compositionally biased region" description="Polar residues" evidence="3">
    <location>
        <begin position="1"/>
        <end position="19"/>
    </location>
</feature>
<feature type="compositionally biased region" description="Polar residues" evidence="3">
    <location>
        <begin position="325"/>
        <end position="348"/>
    </location>
</feature>
<evidence type="ECO:0000250" key="1">
    <source>
        <dbReference type="UniProtKB" id="A0A0H3MD02"/>
    </source>
</evidence>
<evidence type="ECO:0000255" key="2"/>
<evidence type="ECO:0000256" key="3">
    <source>
        <dbReference type="SAM" id="MobiDB-lite"/>
    </source>
</evidence>
<evidence type="ECO:0000269" key="4">
    <source>
    </source>
</evidence>
<evidence type="ECO:0000303" key="5">
    <source>
    </source>
</evidence>
<evidence type="ECO:0000305" key="6"/>
<evidence type="ECO:0000305" key="7">
    <source>
    </source>
</evidence>
<proteinExistence type="evidence at protein level"/>